<evidence type="ECO:0000255" key="1">
    <source>
        <dbReference type="HAMAP-Rule" id="MF_00693"/>
    </source>
</evidence>
<keyword id="KW-0963">Cytoplasm</keyword>
<keyword id="KW-0238">DNA-binding</keyword>
<keyword id="KW-0804">Transcription</keyword>
<keyword id="KW-0805">Transcription regulation</keyword>
<dbReference type="EMBL" id="BA000032">
    <property type="protein sequence ID" value="BAC61354.1"/>
    <property type="molecule type" value="Genomic_DNA"/>
</dbReference>
<dbReference type="RefSeq" id="NP_799521.1">
    <property type="nucleotide sequence ID" value="NC_004605.1"/>
</dbReference>
<dbReference type="RefSeq" id="WP_005464874.1">
    <property type="nucleotide sequence ID" value="NC_004605.1"/>
</dbReference>
<dbReference type="SMR" id="Q87K87"/>
<dbReference type="GeneID" id="1190690"/>
<dbReference type="KEGG" id="vpa:VPA0011"/>
<dbReference type="PATRIC" id="fig|223926.6.peg.2976"/>
<dbReference type="eggNOG" id="COG0217">
    <property type="taxonomic scope" value="Bacteria"/>
</dbReference>
<dbReference type="HOGENOM" id="CLU_062974_2_0_6"/>
<dbReference type="Proteomes" id="UP000002493">
    <property type="component" value="Chromosome 2"/>
</dbReference>
<dbReference type="GO" id="GO:0005829">
    <property type="term" value="C:cytosol"/>
    <property type="evidence" value="ECO:0007669"/>
    <property type="project" value="TreeGrafter"/>
</dbReference>
<dbReference type="GO" id="GO:0003677">
    <property type="term" value="F:DNA binding"/>
    <property type="evidence" value="ECO:0007669"/>
    <property type="project" value="UniProtKB-UniRule"/>
</dbReference>
<dbReference type="GO" id="GO:0006355">
    <property type="term" value="P:regulation of DNA-templated transcription"/>
    <property type="evidence" value="ECO:0007669"/>
    <property type="project" value="UniProtKB-UniRule"/>
</dbReference>
<dbReference type="FunFam" id="1.10.10.200:FF:000003">
    <property type="entry name" value="Probable transcriptional regulatory protein YeeN"/>
    <property type="match status" value="1"/>
</dbReference>
<dbReference type="Gene3D" id="1.10.10.200">
    <property type="match status" value="1"/>
</dbReference>
<dbReference type="Gene3D" id="3.30.70.980">
    <property type="match status" value="2"/>
</dbReference>
<dbReference type="HAMAP" id="MF_00693">
    <property type="entry name" value="Transcrip_reg_TACO1"/>
    <property type="match status" value="1"/>
</dbReference>
<dbReference type="InterPro" id="IPR017856">
    <property type="entry name" value="Integrase-like_N"/>
</dbReference>
<dbReference type="InterPro" id="IPR048300">
    <property type="entry name" value="TACO1_YebC-like_2nd/3rd_dom"/>
</dbReference>
<dbReference type="InterPro" id="IPR049083">
    <property type="entry name" value="TACO1_YebC_N"/>
</dbReference>
<dbReference type="InterPro" id="IPR002876">
    <property type="entry name" value="Transcrip_reg_TACO1-like"/>
</dbReference>
<dbReference type="InterPro" id="IPR026564">
    <property type="entry name" value="Transcrip_reg_TACO1-like_dom3"/>
</dbReference>
<dbReference type="InterPro" id="IPR029072">
    <property type="entry name" value="YebC-like"/>
</dbReference>
<dbReference type="NCBIfam" id="NF009044">
    <property type="entry name" value="PRK12378.1"/>
    <property type="match status" value="1"/>
</dbReference>
<dbReference type="PANTHER" id="PTHR12532">
    <property type="entry name" value="TRANSLATIONAL ACTIVATOR OF CYTOCHROME C OXIDASE 1"/>
    <property type="match status" value="1"/>
</dbReference>
<dbReference type="PANTHER" id="PTHR12532:SF0">
    <property type="entry name" value="TRANSLATIONAL ACTIVATOR OF CYTOCHROME C OXIDASE 1"/>
    <property type="match status" value="1"/>
</dbReference>
<dbReference type="Pfam" id="PF20772">
    <property type="entry name" value="TACO1_YebC_N"/>
    <property type="match status" value="1"/>
</dbReference>
<dbReference type="Pfam" id="PF01709">
    <property type="entry name" value="Transcrip_reg"/>
    <property type="match status" value="1"/>
</dbReference>
<dbReference type="SUPFAM" id="SSF75625">
    <property type="entry name" value="YebC-like"/>
    <property type="match status" value="1"/>
</dbReference>
<protein>
    <recommendedName>
        <fullName evidence="1">Probable transcriptional regulatory protein VPA0011</fullName>
    </recommendedName>
</protein>
<gene>
    <name type="ordered locus">VPA0011</name>
</gene>
<feature type="chain" id="PRO_0000175928" description="Probable transcriptional regulatory protein VPA0011">
    <location>
        <begin position="1"/>
        <end position="238"/>
    </location>
</feature>
<accession>Q87K87</accession>
<comment type="subcellular location">
    <subcellularLocation>
        <location evidence="1">Cytoplasm</location>
    </subcellularLocation>
</comment>
<comment type="similarity">
    <text evidence="1">Belongs to the TACO1 family.</text>
</comment>
<proteinExistence type="inferred from homology"/>
<reference key="1">
    <citation type="journal article" date="2003" name="Lancet">
        <title>Genome sequence of Vibrio parahaemolyticus: a pathogenic mechanism distinct from that of V. cholerae.</title>
        <authorList>
            <person name="Makino K."/>
            <person name="Oshima K."/>
            <person name="Kurokawa K."/>
            <person name="Yokoyama K."/>
            <person name="Uda T."/>
            <person name="Tagomori K."/>
            <person name="Iijima Y."/>
            <person name="Najima M."/>
            <person name="Nakano M."/>
            <person name="Yamashita A."/>
            <person name="Kubota Y."/>
            <person name="Kimura S."/>
            <person name="Yasunaga T."/>
            <person name="Honda T."/>
            <person name="Shinagawa H."/>
            <person name="Hattori M."/>
            <person name="Iida T."/>
        </authorList>
    </citation>
    <scope>NUCLEOTIDE SEQUENCE [LARGE SCALE GENOMIC DNA]</scope>
    <source>
        <strain>RIMD 2210633</strain>
    </source>
</reference>
<sequence length="238" mass="26154">MGRSFEVRKASMAKTAGAKIKVYSKYGKEIYMCAKNGGSDPDMNLSLKHLIAKAKKDQVPAHVIEKALDKANGGGGEDYVPARYEGFGPGGTSVIVDCLTDNGNRTFQDVRQCFVKVGAKIGVEGSVSHMFDHQAVFQFKGEDDEVILETLMMEDVDVTDVELEDGVITVFAPHTEFFKTKTALNAAFPDLTIDVEEITFVPQTQTPVAGEDAEKFQKFLDLLDDCDDVQQVYHNAEL</sequence>
<organism>
    <name type="scientific">Vibrio parahaemolyticus serotype O3:K6 (strain RIMD 2210633)</name>
    <dbReference type="NCBI Taxonomy" id="223926"/>
    <lineage>
        <taxon>Bacteria</taxon>
        <taxon>Pseudomonadati</taxon>
        <taxon>Pseudomonadota</taxon>
        <taxon>Gammaproteobacteria</taxon>
        <taxon>Vibrionales</taxon>
        <taxon>Vibrionaceae</taxon>
        <taxon>Vibrio</taxon>
    </lineage>
</organism>
<name>Y4011_VIBPA</name>